<gene>
    <name type="ordered locus">PSPPH_4931</name>
</gene>
<name>FETP_PSE14</name>
<evidence type="ECO:0000255" key="1">
    <source>
        <dbReference type="HAMAP-Rule" id="MF_00686"/>
    </source>
</evidence>
<protein>
    <recommendedName>
        <fullName evidence="1">Probable Fe(2+)-trafficking protein</fullName>
    </recommendedName>
</protein>
<keyword id="KW-0408">Iron</keyword>
<sequence length="90" mass="10621">MTRTVMCRKYKEELPGLERAPYPGAKGEDIFNHVSQKAWADWQKHQTLLINERRLNMMNAEDRKFLQTEMDKFLSGEEYAQAEGYVPPEK</sequence>
<organism>
    <name type="scientific">Pseudomonas savastanoi pv. phaseolicola (strain 1448A / Race 6)</name>
    <name type="common">Pseudomonas syringae pv. phaseolicola (strain 1448A / Race 6)</name>
    <dbReference type="NCBI Taxonomy" id="264730"/>
    <lineage>
        <taxon>Bacteria</taxon>
        <taxon>Pseudomonadati</taxon>
        <taxon>Pseudomonadota</taxon>
        <taxon>Gammaproteobacteria</taxon>
        <taxon>Pseudomonadales</taxon>
        <taxon>Pseudomonadaceae</taxon>
        <taxon>Pseudomonas</taxon>
    </lineage>
</organism>
<accession>Q48C72</accession>
<proteinExistence type="inferred from homology"/>
<dbReference type="EMBL" id="CP000058">
    <property type="protein sequence ID" value="AAZ35854.1"/>
    <property type="molecule type" value="Genomic_DNA"/>
</dbReference>
<dbReference type="RefSeq" id="WP_002555777.1">
    <property type="nucleotide sequence ID" value="NC_005773.3"/>
</dbReference>
<dbReference type="SMR" id="Q48C72"/>
<dbReference type="KEGG" id="psp:PSPPH_4931"/>
<dbReference type="eggNOG" id="COG2924">
    <property type="taxonomic scope" value="Bacteria"/>
</dbReference>
<dbReference type="HOGENOM" id="CLU_170994_0_0_6"/>
<dbReference type="Proteomes" id="UP000000551">
    <property type="component" value="Chromosome"/>
</dbReference>
<dbReference type="GO" id="GO:0005829">
    <property type="term" value="C:cytosol"/>
    <property type="evidence" value="ECO:0007669"/>
    <property type="project" value="TreeGrafter"/>
</dbReference>
<dbReference type="GO" id="GO:0005506">
    <property type="term" value="F:iron ion binding"/>
    <property type="evidence" value="ECO:0007669"/>
    <property type="project" value="UniProtKB-UniRule"/>
</dbReference>
<dbReference type="GO" id="GO:0034599">
    <property type="term" value="P:cellular response to oxidative stress"/>
    <property type="evidence" value="ECO:0007669"/>
    <property type="project" value="TreeGrafter"/>
</dbReference>
<dbReference type="FunFam" id="1.10.3880.10:FF:000001">
    <property type="entry name" value="Probable Fe(2+)-trafficking protein"/>
    <property type="match status" value="1"/>
</dbReference>
<dbReference type="Gene3D" id="1.10.3880.10">
    <property type="entry name" value="Fe(II) trafficking protein YggX"/>
    <property type="match status" value="1"/>
</dbReference>
<dbReference type="HAMAP" id="MF_00686">
    <property type="entry name" value="Fe_traffic_YggX"/>
    <property type="match status" value="1"/>
</dbReference>
<dbReference type="InterPro" id="IPR007457">
    <property type="entry name" value="Fe_traffick_prot_YggX"/>
</dbReference>
<dbReference type="InterPro" id="IPR036766">
    <property type="entry name" value="Fe_traffick_prot_YggX_sf"/>
</dbReference>
<dbReference type="NCBIfam" id="NF003817">
    <property type="entry name" value="PRK05408.1"/>
    <property type="match status" value="1"/>
</dbReference>
<dbReference type="PANTHER" id="PTHR36965">
    <property type="entry name" value="FE(2+)-TRAFFICKING PROTEIN-RELATED"/>
    <property type="match status" value="1"/>
</dbReference>
<dbReference type="PANTHER" id="PTHR36965:SF1">
    <property type="entry name" value="FE(2+)-TRAFFICKING PROTEIN-RELATED"/>
    <property type="match status" value="1"/>
</dbReference>
<dbReference type="Pfam" id="PF04362">
    <property type="entry name" value="Iron_traffic"/>
    <property type="match status" value="1"/>
</dbReference>
<dbReference type="PIRSF" id="PIRSF029827">
    <property type="entry name" value="Fe_traffic_YggX"/>
    <property type="match status" value="1"/>
</dbReference>
<dbReference type="SUPFAM" id="SSF111148">
    <property type="entry name" value="YggX-like"/>
    <property type="match status" value="1"/>
</dbReference>
<comment type="function">
    <text evidence="1">Could be a mediator in iron transactions between iron acquisition and iron-requiring processes, such as synthesis and/or repair of Fe-S clusters in biosynthetic enzymes.</text>
</comment>
<comment type="similarity">
    <text evidence="1">Belongs to the Fe(2+)-trafficking protein family.</text>
</comment>
<feature type="chain" id="PRO_0000246108" description="Probable Fe(2+)-trafficking protein">
    <location>
        <begin position="1"/>
        <end position="90"/>
    </location>
</feature>
<reference key="1">
    <citation type="journal article" date="2005" name="J. Bacteriol.">
        <title>Whole-genome sequence analysis of Pseudomonas syringae pv. phaseolicola 1448A reveals divergence among pathovars in genes involved in virulence and transposition.</title>
        <authorList>
            <person name="Joardar V."/>
            <person name="Lindeberg M."/>
            <person name="Jackson R.W."/>
            <person name="Selengut J."/>
            <person name="Dodson R."/>
            <person name="Brinkac L.M."/>
            <person name="Daugherty S.C."/>
            <person name="DeBoy R.T."/>
            <person name="Durkin A.S."/>
            <person name="Gwinn Giglio M."/>
            <person name="Madupu R."/>
            <person name="Nelson W.C."/>
            <person name="Rosovitz M.J."/>
            <person name="Sullivan S.A."/>
            <person name="Crabtree J."/>
            <person name="Creasy T."/>
            <person name="Davidsen T.M."/>
            <person name="Haft D.H."/>
            <person name="Zafar N."/>
            <person name="Zhou L."/>
            <person name="Halpin R."/>
            <person name="Holley T."/>
            <person name="Khouri H.M."/>
            <person name="Feldblyum T.V."/>
            <person name="White O."/>
            <person name="Fraser C.M."/>
            <person name="Chatterjee A.K."/>
            <person name="Cartinhour S."/>
            <person name="Schneider D."/>
            <person name="Mansfield J.W."/>
            <person name="Collmer A."/>
            <person name="Buell R."/>
        </authorList>
    </citation>
    <scope>NUCLEOTIDE SEQUENCE [LARGE SCALE GENOMIC DNA]</scope>
    <source>
        <strain>1448A / Race 6</strain>
    </source>
</reference>